<evidence type="ECO:0000255" key="1">
    <source>
        <dbReference type="HAMAP-Rule" id="MF_02219"/>
    </source>
</evidence>
<evidence type="ECO:0000269" key="2">
    <source>
    </source>
</evidence>
<evidence type="ECO:0000269" key="3">
    <source>
    </source>
</evidence>
<evidence type="ECO:0000269" key="4">
    <source>
    </source>
</evidence>
<evidence type="ECO:0000303" key="5">
    <source>
    </source>
</evidence>
<evidence type="ECO:0000303" key="6">
    <source>
    </source>
</evidence>
<evidence type="ECO:0000305" key="7"/>
<evidence type="ECO:0000305" key="8">
    <source>
    </source>
</evidence>
<evidence type="ECO:0000305" key="9">
    <source>
    </source>
</evidence>
<evidence type="ECO:0007744" key="10">
    <source>
        <dbReference type="PDB" id="2JW1"/>
    </source>
</evidence>
<evidence type="ECO:0007829" key="11">
    <source>
        <dbReference type="PDB" id="2JW1"/>
    </source>
</evidence>
<feature type="signal peptide" evidence="1">
    <location>
        <begin position="1"/>
        <end position="22"/>
    </location>
</feature>
<feature type="chain" id="PRO_0000013112" description="Type 3 secretion system secretin" evidence="1">
    <location>
        <begin position="23"/>
        <end position="566"/>
    </location>
</feature>
<feature type="sequence variant" description="In plasmid pCP301.">
    <original>V</original>
    <variation>I</variation>
    <location>
        <position position="296"/>
    </location>
</feature>
<feature type="helix" evidence="11">
    <location>
        <begin position="557"/>
        <end position="564"/>
    </location>
</feature>
<organism>
    <name type="scientific">Shigella flexneri</name>
    <dbReference type="NCBI Taxonomy" id="623"/>
    <lineage>
        <taxon>Bacteria</taxon>
        <taxon>Pseudomonadati</taxon>
        <taxon>Pseudomonadota</taxon>
        <taxon>Gammaproteobacteria</taxon>
        <taxon>Enterobacterales</taxon>
        <taxon>Enterobacteriaceae</taxon>
        <taxon>Shigella</taxon>
    </lineage>
</organism>
<reference key="1">
    <citation type="journal article" date="1993" name="Mol. Microbiol.">
        <title>MxiD, an outer membrane protein necessary for the secretion of the Shigella flexneri lpa invasins.</title>
        <authorList>
            <person name="Allaoui A."/>
            <person name="Sansonetti P.J."/>
            <person name="Parsot C."/>
        </authorList>
    </citation>
    <scope>NUCLEOTIDE SEQUENCE [GENOMIC DNA]</scope>
    <scope>FUNCTION</scope>
    <scope>SUBCELLULAR LOCATION</scope>
    <scope>DISRUPTION PHENOTYPE</scope>
    <source>
        <strain>M90T / Serotype 5a</strain>
        <plasmid>pWR100</plasmid>
    </source>
</reference>
<reference key="2">
    <citation type="journal article" date="2000" name="Mol. Microbiol.">
        <title>The virulence plasmid pWR100 and the repertoire of proteins secreted by the type III secretion apparatus of Shigella flexneri.</title>
        <authorList>
            <person name="Buchrieser C."/>
            <person name="Glaser P."/>
            <person name="Rusniok C."/>
            <person name="Nedjari H."/>
            <person name="d'Hauteville H."/>
            <person name="Kunst F."/>
            <person name="Sansonetti P.J."/>
            <person name="Parsot C."/>
        </authorList>
    </citation>
    <scope>NUCLEOTIDE SEQUENCE [GENOMIC DNA]</scope>
    <source>
        <strain>M90T / Serotype 5a</strain>
        <plasmid>pWR100</plasmid>
    </source>
</reference>
<reference key="3">
    <citation type="journal article" date="2001" name="Infect. Immun.">
        <title>Complete DNA sequence and analysis of the large virulence plasmid of Shigella flexneri.</title>
        <authorList>
            <person name="Venkatesan M.M."/>
            <person name="Goldberg M.B."/>
            <person name="Rose D.J."/>
            <person name="Grotbeck E.J."/>
            <person name="Burland V."/>
            <person name="Blattner F.R."/>
        </authorList>
    </citation>
    <scope>NUCLEOTIDE SEQUENCE [GENOMIC DNA]</scope>
    <source>
        <strain>M90T / Serotype 5a</strain>
        <plasmid>pWR501</plasmid>
    </source>
</reference>
<reference key="4">
    <citation type="journal article" date="2002" name="Nucleic Acids Res.">
        <title>Genome sequence of Shigella flexneri 2a: insights into pathogenicity through comparison with genomes of Escherichia coli K12 and O157.</title>
        <authorList>
            <person name="Jin Q."/>
            <person name="Yuan Z."/>
            <person name="Xu J."/>
            <person name="Wang Y."/>
            <person name="Shen Y."/>
            <person name="Lu W."/>
            <person name="Wang J."/>
            <person name="Liu H."/>
            <person name="Yang J."/>
            <person name="Yang F."/>
            <person name="Zhang X."/>
            <person name="Zhang J."/>
            <person name="Yang G."/>
            <person name="Wu H."/>
            <person name="Qu D."/>
            <person name="Dong J."/>
            <person name="Sun L."/>
            <person name="Xue Y."/>
            <person name="Zhao A."/>
            <person name="Gao Y."/>
            <person name="Zhu J."/>
            <person name="Kan B."/>
            <person name="Ding K."/>
            <person name="Chen S."/>
            <person name="Cheng H."/>
            <person name="Yao Z."/>
            <person name="He B."/>
            <person name="Chen R."/>
            <person name="Ma D."/>
            <person name="Qiang B."/>
            <person name="Wen Y."/>
            <person name="Hou Y."/>
            <person name="Yu J."/>
        </authorList>
    </citation>
    <scope>NUCLEOTIDE SEQUENCE [LARGE SCALE GENOMIC DNA]</scope>
    <source>
        <strain>301 / Serotype 2a</strain>
        <plasmid>pCP301</plasmid>
    </source>
</reference>
<reference key="5">
    <citation type="journal article" date="2001" name="J. Bacteriol.">
        <title>MxiM and MxiJ, base elements of the Mxi-Spa type III secretion system of Shigella, interact with and stabilize the MxiD secretin in the cell envelope.</title>
        <authorList>
            <person name="Schuch R."/>
            <person name="Maurelli A.T."/>
        </authorList>
    </citation>
    <scope>FUNCTION</scope>
    <scope>INTERACTION WITH MXIM/SCTG AND MXIJ/SCTJ</scope>
    <scope>SUBUNIT</scope>
    <scope>SUBCELLULAR LOCATION</scope>
    <source>
        <strain>ATCC 700930 / 2457T / Serotype 2a</strain>
    </source>
</reference>
<reference key="6">
    <citation type="journal article" date="1998" name="Microbiol. Mol. Biol. Rev.">
        <title>Type III protein secretion systems in bacterial pathogens of animals and plants.</title>
        <authorList>
            <person name="Hueck C.J."/>
        </authorList>
    </citation>
    <scope>REVIEW</scope>
    <scope>NOMENCLATURE</scope>
</reference>
<reference key="7">
    <citation type="journal article" date="2018" name="FEMS Microbiol. Lett.">
        <title>Bacterial type III secretion systems: a complex device for the delivery of bacterial effector proteins into eukaryotic host cells.</title>
        <authorList>
            <person name="Wagner S."/>
            <person name="Grin I."/>
            <person name="Malmsheimer S."/>
            <person name="Singh N."/>
            <person name="Torres-Vargas C.E."/>
            <person name="Westerhausen S."/>
        </authorList>
    </citation>
    <scope>REVIEW</scope>
    <scope>SUBUNIT</scope>
</reference>
<reference evidence="10" key="8">
    <citation type="journal article" date="2008" name="Structure">
        <title>Structural characterization of the type-III pilot-secretin complex from Shigella flexneri.</title>
        <authorList>
            <person name="Okon M."/>
            <person name="Moraes T.F."/>
            <person name="Lario P.I."/>
            <person name="Creagh A.L."/>
            <person name="Haynes C.A."/>
            <person name="Strynadka N.C."/>
            <person name="McIntosh L.P."/>
        </authorList>
    </citation>
    <scope>STRUCTURE BY NMR OF 549-566 IN COMPLEX WITH MXIM/SCTG</scope>
    <scope>SUBUNIT</scope>
</reference>
<accession>Q04641</accession>
<accession>Q8VSH0</accession>
<name>SCTC_SHIFL</name>
<proteinExistence type="evidence at protein level"/>
<gene>
    <name evidence="1 6" type="primary">sctC</name>
    <name evidence="5" type="synonym">mxiD</name>
    <name type="ordered locus">CP0145</name>
</gene>
<sequence length="566" mass="63173">MKKFNIKSLTLLIVLLPLIVNANNIDSHLLEQNDIAKYVAQSDTVGSFFERFSALLNYPIVVSKQAAKKRISGEFDLSNPEEMLEKLTLLVGLIWYKDGNALYIYDSGELISKVILLENISLNYLIQYLKDANLYDHRYPIRGNISDKTFYISGPPALVELVANTATLLDKQVSSIGTDKVNFGVIKLKNTFVSDRTYNMRGEDIVIPGVATVVERLLNNGKALSNRQAQNDPMPPFNITQKVSEDSNDFSFSSVTNSSILEDVSLIAYPETNSILVKGNDQQIQIIRDIITQLDVAKRHIELSLWIIDIDKSELNNLGVNWQGTASFGDSFGASFNMSSSASISTLDGNKFIASVMALNQKKKANVVSRPVILTQENIPAIFDNNRTFYVSLVGERNSSLEHVTYGTLINVIPRFSSRGQIEMSLTIEDGTGNSQSNYNYNNENTSVLPEVGRTKISTIARVPQGKSLLIGGYTHETNSNEIISIPFLSSIPVIGNVFKYKTSNISNIVRVFLIQPREIKESSYYNTAEYKSLISEREIQKTTQIIPSETTLLEDEKSLVSYLNY</sequence>
<dbReference type="EMBL" id="X67206">
    <property type="protein sequence ID" value="CAA47644.1"/>
    <property type="molecule type" value="Genomic_DNA"/>
</dbReference>
<dbReference type="EMBL" id="AL391753">
    <property type="protein sequence ID" value="CAC05820.1"/>
    <property type="molecule type" value="Genomic_DNA"/>
</dbReference>
<dbReference type="EMBL" id="AF348706">
    <property type="protein sequence ID" value="AAK18464.1"/>
    <property type="molecule type" value="Genomic_DNA"/>
</dbReference>
<dbReference type="EMBL" id="AF386526">
    <property type="protein sequence ID" value="AAL72331.1"/>
    <property type="molecule type" value="Genomic_DNA"/>
</dbReference>
<dbReference type="PIR" id="S28068">
    <property type="entry name" value="S28068"/>
</dbReference>
<dbReference type="RefSeq" id="NP_085308.1">
    <property type="nucleotide sequence ID" value="NC_002698.1"/>
</dbReference>
<dbReference type="RefSeq" id="NP_858278.1">
    <property type="nucleotide sequence ID" value="NC_004851.1"/>
</dbReference>
<dbReference type="RefSeq" id="WP_010921673.1">
    <property type="nucleotide sequence ID" value="NZ_QWST01000007.1"/>
</dbReference>
<dbReference type="RefSeq" id="YP_009062502.1">
    <property type="nucleotide sequence ID" value="NC_024996.1"/>
</dbReference>
<dbReference type="PDB" id="2JW1">
    <property type="method" value="NMR"/>
    <property type="chains" value="B=549-566"/>
</dbReference>
<dbReference type="PDB" id="6RWK">
    <property type="method" value="EM"/>
    <property type="resolution" value="3.86 A"/>
    <property type="chains" value="0/1/2/3/4/5/6/7/8/9/X/Y/Z/x/y/z=1-566"/>
</dbReference>
<dbReference type="PDB" id="8AXK">
    <property type="method" value="EM"/>
    <property type="resolution" value="4.05 A"/>
    <property type="chains" value="0/1/2/3/4/5/6/7/8/9/X/Y/Z/x/y/z=1-566"/>
</dbReference>
<dbReference type="PDB" id="8AXL">
    <property type="method" value="EM"/>
    <property type="resolution" value="3.42 A"/>
    <property type="chains" value="A/B/C/D/E/F/G/H/I/J/K/L/M/N/O=1-566"/>
</dbReference>
<dbReference type="PDB" id="8AXN">
    <property type="method" value="EM"/>
    <property type="resolution" value="3.34 A"/>
    <property type="chains" value="0/1/2/3/4/5/6/7/8/9/Y/Z/a0/b0/y/z=1-566"/>
</dbReference>
<dbReference type="PDBsum" id="2JW1"/>
<dbReference type="PDBsum" id="6RWK"/>
<dbReference type="PDBsum" id="8AXK"/>
<dbReference type="PDBsum" id="8AXL"/>
<dbReference type="PDBsum" id="8AXN"/>
<dbReference type="BMRB" id="Q04641"/>
<dbReference type="EMDB" id="EMD-10040"/>
<dbReference type="EMDB" id="EMD-15700"/>
<dbReference type="EMDB" id="EMD-15701"/>
<dbReference type="EMDB" id="EMD-15702"/>
<dbReference type="SMR" id="Q04641"/>
<dbReference type="DIP" id="DIP-45187N"/>
<dbReference type="IntAct" id="Q04641">
    <property type="interactions" value="1"/>
</dbReference>
<dbReference type="PaxDb" id="198214-CP0145"/>
<dbReference type="GeneID" id="1238034"/>
<dbReference type="KEGG" id="sfl:CP0145"/>
<dbReference type="PATRIC" id="fig|198214.7.peg.5392"/>
<dbReference type="HOGENOM" id="CLU_022474_4_0_6"/>
<dbReference type="EvolutionaryTrace" id="Q04641"/>
<dbReference type="Proteomes" id="UP000001006">
    <property type="component" value="Plasmid pCP301"/>
</dbReference>
<dbReference type="GO" id="GO:0009279">
    <property type="term" value="C:cell outer membrane"/>
    <property type="evidence" value="ECO:0007669"/>
    <property type="project" value="UniProtKB-SubCell"/>
</dbReference>
<dbReference type="GO" id="GO:0015627">
    <property type="term" value="C:type II protein secretion system complex"/>
    <property type="evidence" value="ECO:0007669"/>
    <property type="project" value="TreeGrafter"/>
</dbReference>
<dbReference type="GO" id="GO:0030257">
    <property type="term" value="C:type III protein secretion system complex"/>
    <property type="evidence" value="ECO:0007669"/>
    <property type="project" value="UniProtKB-UniRule"/>
</dbReference>
<dbReference type="GO" id="GO:0030254">
    <property type="term" value="P:protein secretion by the type III secretion system"/>
    <property type="evidence" value="ECO:0007669"/>
    <property type="project" value="UniProtKB-UniRule"/>
</dbReference>
<dbReference type="Gene3D" id="3.30.1370.120">
    <property type="match status" value="2"/>
</dbReference>
<dbReference type="Gene3D" id="3.55.50.30">
    <property type="match status" value="1"/>
</dbReference>
<dbReference type="HAMAP" id="MF_02219">
    <property type="entry name" value="Type_III_secretin"/>
    <property type="match status" value="1"/>
</dbReference>
<dbReference type="InterPro" id="IPR050810">
    <property type="entry name" value="Bact_Secretion_Sys_Channel"/>
</dbReference>
<dbReference type="InterPro" id="IPR005644">
    <property type="entry name" value="NolW-like"/>
</dbReference>
<dbReference type="InterPro" id="IPR038591">
    <property type="entry name" value="NolW-like_sf"/>
</dbReference>
<dbReference type="InterPro" id="IPR004846">
    <property type="entry name" value="T2SS/T3SS_dom"/>
</dbReference>
<dbReference type="InterPro" id="IPR004845">
    <property type="entry name" value="T2SS_GspD_CS"/>
</dbReference>
<dbReference type="InterPro" id="IPR049034">
    <property type="entry name" value="T3S_SPI-1_N0"/>
</dbReference>
<dbReference type="InterPro" id="IPR003522">
    <property type="entry name" value="T3SS_OM_pore_YscC"/>
</dbReference>
<dbReference type="NCBIfam" id="TIGR02516">
    <property type="entry name" value="type_III_yscC"/>
    <property type="match status" value="1"/>
</dbReference>
<dbReference type="PANTHER" id="PTHR30332">
    <property type="entry name" value="PROBABLE GENERAL SECRETION PATHWAY PROTEIN D"/>
    <property type="match status" value="1"/>
</dbReference>
<dbReference type="PANTHER" id="PTHR30332:SF5">
    <property type="entry name" value="SPI-1 TYPE 3 SECRETION SYSTEM SECRETIN"/>
    <property type="match status" value="1"/>
</dbReference>
<dbReference type="Pfam" id="PF00263">
    <property type="entry name" value="Secretin"/>
    <property type="match status" value="1"/>
</dbReference>
<dbReference type="Pfam" id="PF03958">
    <property type="entry name" value="Secretin_N"/>
    <property type="match status" value="2"/>
</dbReference>
<dbReference type="Pfam" id="PF21304">
    <property type="entry name" value="T3S_SPI-1_N0"/>
    <property type="match status" value="1"/>
</dbReference>
<dbReference type="PRINTS" id="PR01337">
    <property type="entry name" value="TYPE3OMGPROT"/>
</dbReference>
<dbReference type="PROSITE" id="PS00875">
    <property type="entry name" value="T2SP_D"/>
    <property type="match status" value="1"/>
</dbReference>
<keyword id="KW-0002">3D-structure</keyword>
<keyword id="KW-0998">Cell outer membrane</keyword>
<keyword id="KW-0472">Membrane</keyword>
<keyword id="KW-0614">Plasmid</keyword>
<keyword id="KW-0653">Protein transport</keyword>
<keyword id="KW-1185">Reference proteome</keyword>
<keyword id="KW-0732">Signal</keyword>
<keyword id="KW-0811">Translocation</keyword>
<keyword id="KW-0813">Transport</keyword>
<keyword id="KW-0843">Virulence</keyword>
<protein>
    <recommendedName>
        <fullName evidence="1 7">Type 3 secretion system secretin</fullName>
        <shortName evidence="1 7">T3SS secretin</shortName>
    </recommendedName>
    <alternativeName>
        <fullName evidence="7">Outer membrane protein MxiD</fullName>
    </alternativeName>
</protein>
<geneLocation type="plasmid">
    <name>pWR100</name>
</geneLocation>
<geneLocation type="plasmid">
    <name>pWR501</name>
</geneLocation>
<geneLocation type="plasmid">
    <name>pCP301</name>
</geneLocation>
<comment type="function">
    <text evidence="2 4">Component of the type III secretion system (T3SS), also called injectisome, which is used to inject bacterial effector proteins into eukaryotic host cells (PubMed:8437520). Forms a ring-shaped multimeric structure with an apparent central pore in the outer membrane (PubMed:11717255). Necessary for the secretion of Ipa invasins (PubMed:8437520).</text>
</comment>
<comment type="subunit">
    <text evidence="2 3 8">The core secretion machinery of the T3SS is composed of approximately 20 different proteins, including cytoplasmic components, a base, an export apparatus and a needle (PubMed:30107569). This subunit is part of the base, which anchors the injectisome in the bacterial cell envelope (PubMed:11717255). Forms a stable homooligomeric complex (PubMed:11717255). Interacts with the pilotin MxiM/SctG and the inner membrane ring outer protein MxiJ/SctJ (PubMed:11717255, PubMed:18940609).</text>
</comment>
<comment type="interaction">
    <interactant intactId="EBI-15735324">
        <id>Q04641</id>
    </interactant>
    <interactant intactId="EBI-15735345">
        <id>P0A1X2</id>
        <label>mxiM</label>
    </interactant>
    <organismsDiffer>false</organismsDiffer>
    <experiments>3</experiments>
</comment>
<comment type="subcellular location">
    <subcellularLocation>
        <location evidence="1 2 9">Cell outer membrane</location>
    </subcellularLocation>
    <text evidence="2">Localization to the outer membrane requires MxiM/SctG.</text>
</comment>
<comment type="disruption phenotype">
    <text evidence="4">Inactivated mutant strain is unable to invade HeLa cells and to provoke keratoconjunctivitis in guinea-pigs.</text>
</comment>
<comment type="similarity">
    <text evidence="1 7">Belongs to the bacterial secretin family. T3SS SctC subfamily.</text>
</comment>